<name>RR4_CUSGR</name>
<geneLocation type="plastid"/>
<comment type="function">
    <text evidence="1">One of the primary rRNA binding proteins, it binds directly to 16S rRNA where it nucleates assembly of the body of the 30S subunit.</text>
</comment>
<comment type="function">
    <text evidence="1">With S5 and S12 plays an important role in translational accuracy.</text>
</comment>
<comment type="subunit">
    <text evidence="1">Part of the 30S ribosomal subunit. Contacts protein S5. The interaction surface between S4 and S5 is involved in control of translational fidelity (By similarity).</text>
</comment>
<comment type="subcellular location">
    <subcellularLocation>
        <location>Plastid</location>
    </subcellularLocation>
</comment>
<comment type="similarity">
    <text evidence="2">Belongs to the universal ribosomal protein uS4 family.</text>
</comment>
<evidence type="ECO:0000250" key="1"/>
<evidence type="ECO:0000305" key="2"/>
<organism>
    <name type="scientific">Cuscuta gronovii</name>
    <name type="common">Common dodder</name>
    <name type="synonym">Epithymum gronovii</name>
    <dbReference type="NCBI Taxonomy" id="35886"/>
    <lineage>
        <taxon>Eukaryota</taxon>
        <taxon>Viridiplantae</taxon>
        <taxon>Streptophyta</taxon>
        <taxon>Embryophyta</taxon>
        <taxon>Tracheophyta</taxon>
        <taxon>Spermatophyta</taxon>
        <taxon>Magnoliopsida</taxon>
        <taxon>eudicotyledons</taxon>
        <taxon>Gunneridae</taxon>
        <taxon>Pentapetalae</taxon>
        <taxon>asterids</taxon>
        <taxon>lamiids</taxon>
        <taxon>Solanales</taxon>
        <taxon>Convolvulaceae</taxon>
        <taxon>Cuscuteae</taxon>
        <taxon>Cuscuta</taxon>
        <taxon>Cuscuta subgen. Grammica</taxon>
        <taxon>Cuscuta sect. Oxycarpae</taxon>
    </lineage>
</organism>
<proteinExistence type="inferred from homology"/>
<keyword id="KW-0934">Plastid</keyword>
<keyword id="KW-0687">Ribonucleoprotein</keyword>
<keyword id="KW-0689">Ribosomal protein</keyword>
<keyword id="KW-0694">RNA-binding</keyword>
<keyword id="KW-0699">rRNA-binding</keyword>
<gene>
    <name type="primary">rps4</name>
</gene>
<dbReference type="EMBL" id="AM711639">
    <property type="protein sequence ID" value="CAM98331.1"/>
    <property type="molecule type" value="Genomic_DNA"/>
</dbReference>
<dbReference type="RefSeq" id="YP_001430045.1">
    <property type="nucleotide sequence ID" value="NC_009765.1"/>
</dbReference>
<dbReference type="SMR" id="A7M903"/>
<dbReference type="GeneID" id="5536736"/>
<dbReference type="GO" id="GO:0009536">
    <property type="term" value="C:plastid"/>
    <property type="evidence" value="ECO:0007669"/>
    <property type="project" value="UniProtKB-SubCell"/>
</dbReference>
<dbReference type="GO" id="GO:0015935">
    <property type="term" value="C:small ribosomal subunit"/>
    <property type="evidence" value="ECO:0007669"/>
    <property type="project" value="InterPro"/>
</dbReference>
<dbReference type="GO" id="GO:0019843">
    <property type="term" value="F:rRNA binding"/>
    <property type="evidence" value="ECO:0007669"/>
    <property type="project" value="UniProtKB-KW"/>
</dbReference>
<dbReference type="GO" id="GO:0003735">
    <property type="term" value="F:structural constituent of ribosome"/>
    <property type="evidence" value="ECO:0007669"/>
    <property type="project" value="InterPro"/>
</dbReference>
<dbReference type="GO" id="GO:0042274">
    <property type="term" value="P:ribosomal small subunit biogenesis"/>
    <property type="evidence" value="ECO:0007669"/>
    <property type="project" value="TreeGrafter"/>
</dbReference>
<dbReference type="GO" id="GO:0006412">
    <property type="term" value="P:translation"/>
    <property type="evidence" value="ECO:0007669"/>
    <property type="project" value="InterPro"/>
</dbReference>
<dbReference type="CDD" id="cd00165">
    <property type="entry name" value="S4"/>
    <property type="match status" value="1"/>
</dbReference>
<dbReference type="FunFam" id="1.10.1050.10:FF:000002">
    <property type="entry name" value="30S ribosomal protein S4, chloroplastic"/>
    <property type="match status" value="1"/>
</dbReference>
<dbReference type="FunFam" id="3.10.290.10:FF:000081">
    <property type="entry name" value="30S ribosomal protein S4, chloroplastic"/>
    <property type="match status" value="1"/>
</dbReference>
<dbReference type="Gene3D" id="1.10.1050.10">
    <property type="entry name" value="Ribosomal Protein S4 Delta 41, Chain A, domain 1"/>
    <property type="match status" value="1"/>
</dbReference>
<dbReference type="Gene3D" id="3.10.290.10">
    <property type="entry name" value="RNA-binding S4 domain"/>
    <property type="match status" value="1"/>
</dbReference>
<dbReference type="HAMAP" id="MF_01306_B">
    <property type="entry name" value="Ribosomal_uS4_B"/>
    <property type="match status" value="1"/>
</dbReference>
<dbReference type="InterPro" id="IPR022801">
    <property type="entry name" value="Ribosomal_uS4"/>
</dbReference>
<dbReference type="InterPro" id="IPR005709">
    <property type="entry name" value="Ribosomal_uS4_bac-type"/>
</dbReference>
<dbReference type="InterPro" id="IPR018079">
    <property type="entry name" value="Ribosomal_uS4_CS"/>
</dbReference>
<dbReference type="InterPro" id="IPR001912">
    <property type="entry name" value="Ribosomal_uS4_N"/>
</dbReference>
<dbReference type="InterPro" id="IPR002942">
    <property type="entry name" value="S4_RNA-bd"/>
</dbReference>
<dbReference type="InterPro" id="IPR036986">
    <property type="entry name" value="S4_RNA-bd_sf"/>
</dbReference>
<dbReference type="NCBIfam" id="NF003717">
    <property type="entry name" value="PRK05327.1"/>
    <property type="match status" value="1"/>
</dbReference>
<dbReference type="NCBIfam" id="TIGR01017">
    <property type="entry name" value="rpsD_bact"/>
    <property type="match status" value="1"/>
</dbReference>
<dbReference type="PANTHER" id="PTHR11831">
    <property type="entry name" value="30S 40S RIBOSOMAL PROTEIN"/>
    <property type="match status" value="1"/>
</dbReference>
<dbReference type="PANTHER" id="PTHR11831:SF4">
    <property type="entry name" value="SMALL RIBOSOMAL SUBUNIT PROTEIN US4M"/>
    <property type="match status" value="1"/>
</dbReference>
<dbReference type="Pfam" id="PF00163">
    <property type="entry name" value="Ribosomal_S4"/>
    <property type="match status" value="1"/>
</dbReference>
<dbReference type="Pfam" id="PF01479">
    <property type="entry name" value="S4"/>
    <property type="match status" value="1"/>
</dbReference>
<dbReference type="SMART" id="SM01390">
    <property type="entry name" value="Ribosomal_S4"/>
    <property type="match status" value="1"/>
</dbReference>
<dbReference type="SMART" id="SM00363">
    <property type="entry name" value="S4"/>
    <property type="match status" value="1"/>
</dbReference>
<dbReference type="SUPFAM" id="SSF55174">
    <property type="entry name" value="Alpha-L RNA-binding motif"/>
    <property type="match status" value="1"/>
</dbReference>
<dbReference type="PROSITE" id="PS00632">
    <property type="entry name" value="RIBOSOMAL_S4"/>
    <property type="match status" value="1"/>
</dbReference>
<dbReference type="PROSITE" id="PS50889">
    <property type="entry name" value="S4"/>
    <property type="match status" value="1"/>
</dbReference>
<accession>A7M903</accession>
<protein>
    <recommendedName>
        <fullName evidence="2">Small ribosomal subunit protein uS4c</fullName>
    </recommendedName>
    <alternativeName>
        <fullName>Plastid 30S ribosomal protein S4</fullName>
    </alternativeName>
</protein>
<feature type="chain" id="PRO_0000322366" description="Small ribosomal subunit protein uS4c">
    <location>
        <begin position="1"/>
        <end position="197"/>
    </location>
</feature>
<feature type="domain" description="S4 RNA-binding">
    <location>
        <begin position="85"/>
        <end position="157"/>
    </location>
</feature>
<sequence length="197" mass="22884">MSRYRGPRFKKIRRLGALPGLTNKSPRAIRDLRNQSRSEYRIRLEEKQKLRFHYGLTEKQLINYVRIARKAKGSTGKVLLQLLEMRLDNILFRLGMASTIPAARQLVNHRHVLVNGRLVDRPSYRCKPRDIIMPKNTTKSGVLVQNSLQLFTGKELATHLNLFSTPYKGLVNKIVDTNWIGLKINELLVVEYYSRQT</sequence>
<reference key="1">
    <citation type="journal article" date="2007" name="BMC Plant Biol.">
        <title>Complete DNA sequences of the plastid genomes of two parasitic flowering plant species, Cuscuta reflexa and Cuscuta gronovii.</title>
        <authorList>
            <person name="Funk H.T."/>
            <person name="Berg S."/>
            <person name="Krupinska K."/>
            <person name="Maier U.-G."/>
            <person name="Krause K."/>
        </authorList>
    </citation>
    <scope>NUCLEOTIDE SEQUENCE [LARGE SCALE GENOMIC DNA]</scope>
</reference>